<organism>
    <name type="scientific">Neisseria gonorrhoeae (strain NCCP11945)</name>
    <dbReference type="NCBI Taxonomy" id="521006"/>
    <lineage>
        <taxon>Bacteria</taxon>
        <taxon>Pseudomonadati</taxon>
        <taxon>Pseudomonadota</taxon>
        <taxon>Betaproteobacteria</taxon>
        <taxon>Neisseriales</taxon>
        <taxon>Neisseriaceae</taxon>
        <taxon>Neisseria</taxon>
    </lineage>
</organism>
<comment type="function">
    <text evidence="1">Catalyzes the formation of S-adenosylmethionine (AdoMet) from methionine and ATP. The overall synthetic reaction is composed of two sequential steps, AdoMet formation and the subsequent tripolyphosphate hydrolysis which occurs prior to release of AdoMet from the enzyme.</text>
</comment>
<comment type="catalytic activity">
    <reaction evidence="1">
        <text>L-methionine + ATP + H2O = S-adenosyl-L-methionine + phosphate + diphosphate</text>
        <dbReference type="Rhea" id="RHEA:21080"/>
        <dbReference type="ChEBI" id="CHEBI:15377"/>
        <dbReference type="ChEBI" id="CHEBI:30616"/>
        <dbReference type="ChEBI" id="CHEBI:33019"/>
        <dbReference type="ChEBI" id="CHEBI:43474"/>
        <dbReference type="ChEBI" id="CHEBI:57844"/>
        <dbReference type="ChEBI" id="CHEBI:59789"/>
        <dbReference type="EC" id="2.5.1.6"/>
    </reaction>
</comment>
<comment type="cofactor">
    <cofactor evidence="1">
        <name>Mg(2+)</name>
        <dbReference type="ChEBI" id="CHEBI:18420"/>
    </cofactor>
    <text evidence="1">Binds 2 divalent ions per subunit.</text>
</comment>
<comment type="cofactor">
    <cofactor evidence="1">
        <name>K(+)</name>
        <dbReference type="ChEBI" id="CHEBI:29103"/>
    </cofactor>
    <text evidence="1">Binds 1 potassium ion per subunit.</text>
</comment>
<comment type="pathway">
    <text evidence="1">Amino-acid biosynthesis; S-adenosyl-L-methionine biosynthesis; S-adenosyl-L-methionine from L-methionine: step 1/1.</text>
</comment>
<comment type="subunit">
    <text evidence="1">Homotetramer; dimer of dimers.</text>
</comment>
<comment type="subcellular location">
    <subcellularLocation>
        <location evidence="1">Cytoplasm</location>
    </subcellularLocation>
</comment>
<comment type="similarity">
    <text evidence="1">Belongs to the AdoMet synthase family.</text>
</comment>
<sequence length="389" mass="41951">MSEYLFTSESVSEGHPDKVADQVSDAILDAILAQDPKARVAAETLVNTGLCVLAGEITTTAQVDYIKVARETIKRIGYNSSELGFDANGCAVGVYYDQQSPDIAQGVNEGEGIDLNQGAGDQGLMFGYACDETPTLMPFAIYYSHRLMQRQSELRKDGRLPWLRPDAKAQLTVVYDSETGKVKRIDTVVLSTQHDPAISHEELSKAVIEQIIKPVLPPELLTDETKYLINPTGRFVIGGPQGDCGLTGRKIIVDTYGGAAPHGGGAFSGKDPSKVDRSAAYACRYVAKNIVAAGLATQCQIQVSYAIGVAEPTSISIDTFGTGKISEEKLIALVCEHFDLRPKGIVQMLDLLRPIYGKSAAYGHFGREEPEFTWERTDKAASLKAAAGL</sequence>
<reference key="1">
    <citation type="journal article" date="2008" name="J. Bacteriol.">
        <title>Complete genome sequence of Neisseria gonorrhoeae NCCP11945.</title>
        <authorList>
            <person name="Chung G.T."/>
            <person name="Yoo J.S."/>
            <person name="Oh H.B."/>
            <person name="Lee Y.S."/>
            <person name="Cha S.H."/>
            <person name="Kim S.J."/>
            <person name="Yoo C.K."/>
        </authorList>
    </citation>
    <scope>NUCLEOTIDE SEQUENCE [LARGE SCALE GENOMIC DNA]</scope>
    <source>
        <strain>NCCP11945</strain>
    </source>
</reference>
<gene>
    <name evidence="1" type="primary">metK</name>
    <name type="ordered locus">NGK_0150</name>
</gene>
<protein>
    <recommendedName>
        <fullName evidence="1">S-adenosylmethionine synthase</fullName>
        <shortName evidence="1">AdoMet synthase</shortName>
        <ecNumber evidence="1">2.5.1.6</ecNumber>
    </recommendedName>
    <alternativeName>
        <fullName evidence="1">MAT</fullName>
    </alternativeName>
    <alternativeName>
        <fullName evidence="1">Methionine adenosyltransferase</fullName>
    </alternativeName>
</protein>
<accession>B4RQ36</accession>
<feature type="chain" id="PRO_1000093066" description="S-adenosylmethionine synthase">
    <location>
        <begin position="1"/>
        <end position="389"/>
    </location>
</feature>
<feature type="region of interest" description="Flexible loop" evidence="1">
    <location>
        <begin position="99"/>
        <end position="109"/>
    </location>
</feature>
<feature type="binding site" description="in other chain" evidence="1">
    <location>
        <position position="15"/>
    </location>
    <ligand>
        <name>ATP</name>
        <dbReference type="ChEBI" id="CHEBI:30616"/>
        <note>ligand shared between two neighboring subunits</note>
    </ligand>
</feature>
<feature type="binding site" evidence="1">
    <location>
        <position position="17"/>
    </location>
    <ligand>
        <name>Mg(2+)</name>
        <dbReference type="ChEBI" id="CHEBI:18420"/>
    </ligand>
</feature>
<feature type="binding site" evidence="1">
    <location>
        <position position="43"/>
    </location>
    <ligand>
        <name>K(+)</name>
        <dbReference type="ChEBI" id="CHEBI:29103"/>
    </ligand>
</feature>
<feature type="binding site" description="in other chain" evidence="1">
    <location>
        <position position="56"/>
    </location>
    <ligand>
        <name>L-methionine</name>
        <dbReference type="ChEBI" id="CHEBI:57844"/>
        <note>ligand shared between two neighboring subunits</note>
    </ligand>
</feature>
<feature type="binding site" description="in other chain" evidence="1">
    <location>
        <position position="99"/>
    </location>
    <ligand>
        <name>L-methionine</name>
        <dbReference type="ChEBI" id="CHEBI:57844"/>
        <note>ligand shared between two neighboring subunits</note>
    </ligand>
</feature>
<feature type="binding site" description="in other chain" evidence="1">
    <location>
        <begin position="166"/>
        <end position="168"/>
    </location>
    <ligand>
        <name>ATP</name>
        <dbReference type="ChEBI" id="CHEBI:30616"/>
        <note>ligand shared between two neighboring subunits</note>
    </ligand>
</feature>
<feature type="binding site" description="in other chain" evidence="1">
    <location>
        <begin position="234"/>
        <end position="235"/>
    </location>
    <ligand>
        <name>ATP</name>
        <dbReference type="ChEBI" id="CHEBI:30616"/>
        <note>ligand shared between two neighboring subunits</note>
    </ligand>
</feature>
<feature type="binding site" evidence="1">
    <location>
        <position position="243"/>
    </location>
    <ligand>
        <name>ATP</name>
        <dbReference type="ChEBI" id="CHEBI:30616"/>
        <note>ligand shared between two neighboring subunits</note>
    </ligand>
</feature>
<feature type="binding site" evidence="1">
    <location>
        <position position="243"/>
    </location>
    <ligand>
        <name>L-methionine</name>
        <dbReference type="ChEBI" id="CHEBI:57844"/>
        <note>ligand shared between two neighboring subunits</note>
    </ligand>
</feature>
<feature type="binding site" description="in other chain" evidence="1">
    <location>
        <begin position="249"/>
        <end position="250"/>
    </location>
    <ligand>
        <name>ATP</name>
        <dbReference type="ChEBI" id="CHEBI:30616"/>
        <note>ligand shared between two neighboring subunits</note>
    </ligand>
</feature>
<feature type="binding site" evidence="1">
    <location>
        <position position="266"/>
    </location>
    <ligand>
        <name>ATP</name>
        <dbReference type="ChEBI" id="CHEBI:30616"/>
        <note>ligand shared between two neighboring subunits</note>
    </ligand>
</feature>
<feature type="binding site" evidence="1">
    <location>
        <position position="270"/>
    </location>
    <ligand>
        <name>ATP</name>
        <dbReference type="ChEBI" id="CHEBI:30616"/>
        <note>ligand shared between two neighboring subunits</note>
    </ligand>
</feature>
<feature type="binding site" description="in other chain" evidence="1">
    <location>
        <position position="274"/>
    </location>
    <ligand>
        <name>L-methionine</name>
        <dbReference type="ChEBI" id="CHEBI:57844"/>
        <note>ligand shared between two neighboring subunits</note>
    </ligand>
</feature>
<name>METK_NEIG2</name>
<dbReference type="EC" id="2.5.1.6" evidence="1"/>
<dbReference type="EMBL" id="CP001050">
    <property type="protein sequence ID" value="ACF28848.1"/>
    <property type="molecule type" value="Genomic_DNA"/>
</dbReference>
<dbReference type="RefSeq" id="WP_003687370.1">
    <property type="nucleotide sequence ID" value="NC_011035.1"/>
</dbReference>
<dbReference type="SMR" id="B4RQ36"/>
<dbReference type="GeneID" id="66752372"/>
<dbReference type="KEGG" id="ngk:NGK_0150"/>
<dbReference type="HOGENOM" id="CLU_041802_1_1_4"/>
<dbReference type="UniPathway" id="UPA00315">
    <property type="reaction ID" value="UER00080"/>
</dbReference>
<dbReference type="Proteomes" id="UP000002564">
    <property type="component" value="Chromosome"/>
</dbReference>
<dbReference type="GO" id="GO:0005737">
    <property type="term" value="C:cytoplasm"/>
    <property type="evidence" value="ECO:0007669"/>
    <property type="project" value="UniProtKB-SubCell"/>
</dbReference>
<dbReference type="GO" id="GO:0005524">
    <property type="term" value="F:ATP binding"/>
    <property type="evidence" value="ECO:0007669"/>
    <property type="project" value="UniProtKB-UniRule"/>
</dbReference>
<dbReference type="GO" id="GO:0000287">
    <property type="term" value="F:magnesium ion binding"/>
    <property type="evidence" value="ECO:0007669"/>
    <property type="project" value="UniProtKB-UniRule"/>
</dbReference>
<dbReference type="GO" id="GO:0004478">
    <property type="term" value="F:methionine adenosyltransferase activity"/>
    <property type="evidence" value="ECO:0007669"/>
    <property type="project" value="UniProtKB-UniRule"/>
</dbReference>
<dbReference type="GO" id="GO:0006730">
    <property type="term" value="P:one-carbon metabolic process"/>
    <property type="evidence" value="ECO:0007669"/>
    <property type="project" value="UniProtKB-KW"/>
</dbReference>
<dbReference type="GO" id="GO:0006556">
    <property type="term" value="P:S-adenosylmethionine biosynthetic process"/>
    <property type="evidence" value="ECO:0007669"/>
    <property type="project" value="UniProtKB-UniRule"/>
</dbReference>
<dbReference type="CDD" id="cd18079">
    <property type="entry name" value="S-AdoMet_synt"/>
    <property type="match status" value="1"/>
</dbReference>
<dbReference type="FunFam" id="3.30.300.10:FF:000003">
    <property type="entry name" value="S-adenosylmethionine synthase"/>
    <property type="match status" value="1"/>
</dbReference>
<dbReference type="FunFam" id="3.30.300.10:FF:000004">
    <property type="entry name" value="S-adenosylmethionine synthase"/>
    <property type="match status" value="1"/>
</dbReference>
<dbReference type="Gene3D" id="3.30.300.10">
    <property type="match status" value="3"/>
</dbReference>
<dbReference type="HAMAP" id="MF_00086">
    <property type="entry name" value="S_AdoMet_synth1"/>
    <property type="match status" value="1"/>
</dbReference>
<dbReference type="InterPro" id="IPR022631">
    <property type="entry name" value="ADOMET_SYNTHASE_CS"/>
</dbReference>
<dbReference type="InterPro" id="IPR022630">
    <property type="entry name" value="S-AdoMet_synt_C"/>
</dbReference>
<dbReference type="InterPro" id="IPR022629">
    <property type="entry name" value="S-AdoMet_synt_central"/>
</dbReference>
<dbReference type="InterPro" id="IPR022628">
    <property type="entry name" value="S-AdoMet_synt_N"/>
</dbReference>
<dbReference type="InterPro" id="IPR002133">
    <property type="entry name" value="S-AdoMet_synthetase"/>
</dbReference>
<dbReference type="InterPro" id="IPR022636">
    <property type="entry name" value="S-AdoMet_synthetase_sfam"/>
</dbReference>
<dbReference type="NCBIfam" id="TIGR01034">
    <property type="entry name" value="metK"/>
    <property type="match status" value="1"/>
</dbReference>
<dbReference type="PANTHER" id="PTHR11964">
    <property type="entry name" value="S-ADENOSYLMETHIONINE SYNTHETASE"/>
    <property type="match status" value="1"/>
</dbReference>
<dbReference type="Pfam" id="PF02773">
    <property type="entry name" value="S-AdoMet_synt_C"/>
    <property type="match status" value="1"/>
</dbReference>
<dbReference type="Pfam" id="PF02772">
    <property type="entry name" value="S-AdoMet_synt_M"/>
    <property type="match status" value="1"/>
</dbReference>
<dbReference type="Pfam" id="PF00438">
    <property type="entry name" value="S-AdoMet_synt_N"/>
    <property type="match status" value="1"/>
</dbReference>
<dbReference type="PIRSF" id="PIRSF000497">
    <property type="entry name" value="MAT"/>
    <property type="match status" value="1"/>
</dbReference>
<dbReference type="SUPFAM" id="SSF55973">
    <property type="entry name" value="S-adenosylmethionine synthetase"/>
    <property type="match status" value="3"/>
</dbReference>
<dbReference type="PROSITE" id="PS00376">
    <property type="entry name" value="ADOMET_SYNTHASE_1"/>
    <property type="match status" value="1"/>
</dbReference>
<dbReference type="PROSITE" id="PS00377">
    <property type="entry name" value="ADOMET_SYNTHASE_2"/>
    <property type="match status" value="1"/>
</dbReference>
<evidence type="ECO:0000255" key="1">
    <source>
        <dbReference type="HAMAP-Rule" id="MF_00086"/>
    </source>
</evidence>
<keyword id="KW-0067">ATP-binding</keyword>
<keyword id="KW-0963">Cytoplasm</keyword>
<keyword id="KW-0460">Magnesium</keyword>
<keyword id="KW-0479">Metal-binding</keyword>
<keyword id="KW-0547">Nucleotide-binding</keyword>
<keyword id="KW-0554">One-carbon metabolism</keyword>
<keyword id="KW-0630">Potassium</keyword>
<keyword id="KW-0808">Transferase</keyword>
<proteinExistence type="inferred from homology"/>